<comment type="function">
    <text evidence="1">Catalyzes the attachment of isoleucine to tRNA(Ile). As IleRS can inadvertently accommodate and process structurally similar amino acids such as valine, to avoid such errors it has two additional distinct tRNA(Ile)-dependent editing activities. One activity is designated as 'pretransfer' editing and involves the hydrolysis of activated Val-AMP. The other activity is designated 'posttransfer' editing and involves deacylation of mischarged Val-tRNA(Ile).</text>
</comment>
<comment type="catalytic activity">
    <reaction evidence="1">
        <text>tRNA(Ile) + L-isoleucine + ATP = L-isoleucyl-tRNA(Ile) + AMP + diphosphate</text>
        <dbReference type="Rhea" id="RHEA:11060"/>
        <dbReference type="Rhea" id="RHEA-COMP:9666"/>
        <dbReference type="Rhea" id="RHEA-COMP:9695"/>
        <dbReference type="ChEBI" id="CHEBI:30616"/>
        <dbReference type="ChEBI" id="CHEBI:33019"/>
        <dbReference type="ChEBI" id="CHEBI:58045"/>
        <dbReference type="ChEBI" id="CHEBI:78442"/>
        <dbReference type="ChEBI" id="CHEBI:78528"/>
        <dbReference type="ChEBI" id="CHEBI:456215"/>
        <dbReference type="EC" id="6.1.1.5"/>
    </reaction>
</comment>
<comment type="cofactor">
    <cofactor evidence="1">
        <name>Zn(2+)</name>
        <dbReference type="ChEBI" id="CHEBI:29105"/>
    </cofactor>
</comment>
<comment type="subunit">
    <text evidence="1">Monomer.</text>
</comment>
<comment type="subcellular location">
    <subcellularLocation>
        <location evidence="1">Cytoplasm</location>
    </subcellularLocation>
</comment>
<comment type="domain">
    <text evidence="1">IleRS has two distinct active sites: one for aminoacylation and one for editing. The misactivated valine is translocated from the active site to the editing site, which sterically excludes the correctly activated isoleucine. The single editing site contains two valyl binding pockets, one specific for each substrate (Val-AMP or Val-tRNA(Ile)).</text>
</comment>
<comment type="similarity">
    <text evidence="1">Belongs to the class-I aminoacyl-tRNA synthetase family. IleS type 2 subfamily.</text>
</comment>
<evidence type="ECO:0000255" key="1">
    <source>
        <dbReference type="HAMAP-Rule" id="MF_02003"/>
    </source>
</evidence>
<feature type="chain" id="PRO_0000098523" description="Isoleucine--tRNA ligase">
    <location>
        <begin position="1"/>
        <end position="1056"/>
    </location>
</feature>
<feature type="short sequence motif" description="'HIGH' region">
    <location>
        <begin position="56"/>
        <end position="66"/>
    </location>
</feature>
<feature type="short sequence motif" description="'KMSKS' region">
    <location>
        <begin position="603"/>
        <end position="607"/>
    </location>
</feature>
<feature type="binding site" evidence="1">
    <location>
        <position position="606"/>
    </location>
    <ligand>
        <name>ATP</name>
        <dbReference type="ChEBI" id="CHEBI:30616"/>
    </ligand>
</feature>
<name>SYI_BDEBA</name>
<dbReference type="EC" id="6.1.1.5" evidence="1"/>
<dbReference type="EMBL" id="BX842652">
    <property type="protein sequence ID" value="CAE80087.1"/>
    <property type="molecule type" value="Genomic_DNA"/>
</dbReference>
<dbReference type="RefSeq" id="WP_011164689.1">
    <property type="nucleotide sequence ID" value="NC_005363.1"/>
</dbReference>
<dbReference type="SMR" id="Q6MKX0"/>
<dbReference type="STRING" id="264462.Bd2257"/>
<dbReference type="GeneID" id="93013188"/>
<dbReference type="KEGG" id="bba:Bd2257"/>
<dbReference type="eggNOG" id="COG0060">
    <property type="taxonomic scope" value="Bacteria"/>
</dbReference>
<dbReference type="HOGENOM" id="CLU_001493_1_1_7"/>
<dbReference type="Proteomes" id="UP000008080">
    <property type="component" value="Chromosome"/>
</dbReference>
<dbReference type="GO" id="GO:0005737">
    <property type="term" value="C:cytoplasm"/>
    <property type="evidence" value="ECO:0007669"/>
    <property type="project" value="UniProtKB-SubCell"/>
</dbReference>
<dbReference type="GO" id="GO:0002161">
    <property type="term" value="F:aminoacyl-tRNA deacylase activity"/>
    <property type="evidence" value="ECO:0007669"/>
    <property type="project" value="InterPro"/>
</dbReference>
<dbReference type="GO" id="GO:0005524">
    <property type="term" value="F:ATP binding"/>
    <property type="evidence" value="ECO:0007669"/>
    <property type="project" value="UniProtKB-UniRule"/>
</dbReference>
<dbReference type="GO" id="GO:0004822">
    <property type="term" value="F:isoleucine-tRNA ligase activity"/>
    <property type="evidence" value="ECO:0007669"/>
    <property type="project" value="UniProtKB-UniRule"/>
</dbReference>
<dbReference type="GO" id="GO:0000049">
    <property type="term" value="F:tRNA binding"/>
    <property type="evidence" value="ECO:0007669"/>
    <property type="project" value="InterPro"/>
</dbReference>
<dbReference type="GO" id="GO:0008270">
    <property type="term" value="F:zinc ion binding"/>
    <property type="evidence" value="ECO:0007669"/>
    <property type="project" value="UniProtKB-UniRule"/>
</dbReference>
<dbReference type="GO" id="GO:0006428">
    <property type="term" value="P:isoleucyl-tRNA aminoacylation"/>
    <property type="evidence" value="ECO:0007669"/>
    <property type="project" value="UniProtKB-UniRule"/>
</dbReference>
<dbReference type="CDD" id="cd07961">
    <property type="entry name" value="Anticodon_Ia_Ile_ABEc"/>
    <property type="match status" value="1"/>
</dbReference>
<dbReference type="CDD" id="cd00818">
    <property type="entry name" value="IleRS_core"/>
    <property type="match status" value="1"/>
</dbReference>
<dbReference type="FunFam" id="3.40.50.620:FF:000133">
    <property type="entry name" value="Isoleucyl-tRNA synthetase, cytoplasmic"/>
    <property type="match status" value="1"/>
</dbReference>
<dbReference type="FunFam" id="3.40.50.620:FF:000023">
    <property type="entry name" value="Isoleucyl-tRNA synthetase,cytoplasmic"/>
    <property type="match status" value="1"/>
</dbReference>
<dbReference type="Gene3D" id="3.40.50.620">
    <property type="entry name" value="HUPs"/>
    <property type="match status" value="2"/>
</dbReference>
<dbReference type="Gene3D" id="1.10.730.10">
    <property type="entry name" value="Isoleucyl-tRNA Synthetase, Domain 1"/>
    <property type="match status" value="1"/>
</dbReference>
<dbReference type="HAMAP" id="MF_02003">
    <property type="entry name" value="Ile_tRNA_synth_type2"/>
    <property type="match status" value="1"/>
</dbReference>
<dbReference type="InterPro" id="IPR001412">
    <property type="entry name" value="aa-tRNA-synth_I_CS"/>
</dbReference>
<dbReference type="InterPro" id="IPR002300">
    <property type="entry name" value="aa-tRNA-synth_Ia"/>
</dbReference>
<dbReference type="InterPro" id="IPR033709">
    <property type="entry name" value="Anticodon_Ile_ABEc"/>
</dbReference>
<dbReference type="InterPro" id="IPR002301">
    <property type="entry name" value="Ile-tRNA-ligase"/>
</dbReference>
<dbReference type="InterPro" id="IPR023586">
    <property type="entry name" value="Ile-tRNA-ligase_type2"/>
</dbReference>
<dbReference type="InterPro" id="IPR013155">
    <property type="entry name" value="M/V/L/I-tRNA-synth_anticd-bd"/>
</dbReference>
<dbReference type="InterPro" id="IPR014729">
    <property type="entry name" value="Rossmann-like_a/b/a_fold"/>
</dbReference>
<dbReference type="InterPro" id="IPR009080">
    <property type="entry name" value="tRNAsynth_Ia_anticodon-bd"/>
</dbReference>
<dbReference type="InterPro" id="IPR009008">
    <property type="entry name" value="Val/Leu/Ile-tRNA-synth_edit"/>
</dbReference>
<dbReference type="NCBIfam" id="TIGR00392">
    <property type="entry name" value="ileS"/>
    <property type="match status" value="1"/>
</dbReference>
<dbReference type="PANTHER" id="PTHR42780:SF1">
    <property type="entry name" value="ISOLEUCINE--TRNA LIGASE, CYTOPLASMIC"/>
    <property type="match status" value="1"/>
</dbReference>
<dbReference type="PANTHER" id="PTHR42780">
    <property type="entry name" value="SOLEUCYL-TRNA SYNTHETASE"/>
    <property type="match status" value="1"/>
</dbReference>
<dbReference type="Pfam" id="PF08264">
    <property type="entry name" value="Anticodon_1"/>
    <property type="match status" value="1"/>
</dbReference>
<dbReference type="Pfam" id="PF19302">
    <property type="entry name" value="DUF5915"/>
    <property type="match status" value="1"/>
</dbReference>
<dbReference type="Pfam" id="PF00133">
    <property type="entry name" value="tRNA-synt_1"/>
    <property type="match status" value="1"/>
</dbReference>
<dbReference type="PRINTS" id="PR00984">
    <property type="entry name" value="TRNASYNTHILE"/>
</dbReference>
<dbReference type="SUPFAM" id="SSF47323">
    <property type="entry name" value="Anticodon-binding domain of a subclass of class I aminoacyl-tRNA synthetases"/>
    <property type="match status" value="2"/>
</dbReference>
<dbReference type="SUPFAM" id="SSF52374">
    <property type="entry name" value="Nucleotidylyl transferase"/>
    <property type="match status" value="1"/>
</dbReference>
<dbReference type="SUPFAM" id="SSF50677">
    <property type="entry name" value="ValRS/IleRS/LeuRS editing domain"/>
    <property type="match status" value="1"/>
</dbReference>
<dbReference type="PROSITE" id="PS00178">
    <property type="entry name" value="AA_TRNA_LIGASE_I"/>
    <property type="match status" value="1"/>
</dbReference>
<protein>
    <recommendedName>
        <fullName evidence="1">Isoleucine--tRNA ligase</fullName>
        <ecNumber evidence="1">6.1.1.5</ecNumber>
    </recommendedName>
    <alternativeName>
        <fullName evidence="1">Isoleucyl-tRNA synthetase</fullName>
        <shortName evidence="1">IleRS</shortName>
    </alternativeName>
</protein>
<keyword id="KW-0030">Aminoacyl-tRNA synthetase</keyword>
<keyword id="KW-0067">ATP-binding</keyword>
<keyword id="KW-0963">Cytoplasm</keyword>
<keyword id="KW-0436">Ligase</keyword>
<keyword id="KW-0479">Metal-binding</keyword>
<keyword id="KW-0547">Nucleotide-binding</keyword>
<keyword id="KW-0648">Protein biosynthesis</keyword>
<keyword id="KW-1185">Reference proteome</keyword>
<keyword id="KW-0862">Zinc</keyword>
<gene>
    <name evidence="1" type="primary">ileS</name>
    <name type="ordered locus">Bd2257</name>
</gene>
<reference key="1">
    <citation type="journal article" date="2004" name="Science">
        <title>A predator unmasked: life cycle of Bdellovibrio bacteriovorus from a genomic perspective.</title>
        <authorList>
            <person name="Rendulic S."/>
            <person name="Jagtap P."/>
            <person name="Rosinus A."/>
            <person name="Eppinger M."/>
            <person name="Baar C."/>
            <person name="Lanz C."/>
            <person name="Keller H."/>
            <person name="Lambert C."/>
            <person name="Evans K.J."/>
            <person name="Goesmann A."/>
            <person name="Meyer F."/>
            <person name="Sockett R.E."/>
            <person name="Schuster S.C."/>
        </authorList>
    </citation>
    <scope>NUCLEOTIDE SEQUENCE [LARGE SCALE GENOMIC DNA]</scope>
    <source>
        <strain>ATCC 15356 / DSM 50701 / NCIMB 9529 / HD100</strain>
    </source>
</reference>
<accession>Q6MKX0</accession>
<sequence>MTNANTRSTPYSAVKPDVNLAKQEETILDFWDQEKIFAQSLNPEGKKTYSFYDGPPFATGLPHYGHLLAGVLKDVVPRYWTMKGYTVPRRFGWDCHGLPVEYEINKTHKIESRKDVFKMGVANYNDACRSIVKRYSTEWKTTVRRVGRWVDMENPYFTMDVSFMQSVWWVFQQLFNKGLIYEGYKVVPYSVGISTSLSNFEANQNYKMVQDPAITVMFKLVNQPDTAIMAWTTTPWTLPSNLALAVGNDIEYVKVQEKATGRKLIMAQALLSSVFKKADEEVEVLQMMKGTELVGLTYEPLFPYFGDRADKGAFRIISSDHVTTESGTGVVHMAPAFGEEDYYACAKAGIPMVNPVDDDGMFTMEVPDYAGKRVKEADKDIIADLKKRGNLFKQDTIQHSYPFCYRSDTPLIYRAVSSWFVAVEKIKEELIANNKQTSWVPDHLRDGRFGNWLEGARDWAISRNRFWGTPLPIWRNAEGEVMCIGSRAELEKLSGQKVDDLHIEFVDKITIPSPTGKSPLKRVDGVLDCWFESGSMPYAQWGYPETSVEDFKKAFPADFIAEGLDQTRGWFYTLSIIGTALFNQAPFKNVVVNGLVLAEDGRKMSKSLKNYPDPMEVLNQHGADALRLYLIDSPVVKAQELKFSEKGVYDIVRKILLRWWNSYSFFANYANIDGFVPKGDAKKSPNILDQWVLSRLNGLIANTHKEMDAYRLYNVVPHLLQFIEDLTNTYIRFNRSLFWQDGMPETKRYAYETLHEVLVTLSRLMAPFAPFMSEVTYKNLAQVLKDKKDSVHLESFPTADLSMLRPELEEAVKAMDTLVTLGRNHREKIGVKAKIPLNEIKIIHRSAELLETLKKFEPFFVDELNFRKVVYNPNEDQFVQVTAKANFPVLGKRLGPKMKAVGAGIMSMSLENILKLEGGGVVVIEGEEISLSDVEIRRAPKGDNANLSVHQIVSIEVDPTVTPEQEREGLAREIMRKIQVARKTADFQMDDKITLEIACDGALLDALNAHKDMITGETLTKNLNILALTAEPNGKHTETSDIDGQVIKIGVTNLPR</sequence>
<organism>
    <name type="scientific">Bdellovibrio bacteriovorus (strain ATCC 15356 / DSM 50701 / NCIMB 9529 / HD100)</name>
    <dbReference type="NCBI Taxonomy" id="264462"/>
    <lineage>
        <taxon>Bacteria</taxon>
        <taxon>Pseudomonadati</taxon>
        <taxon>Bdellovibrionota</taxon>
        <taxon>Bdellovibrionia</taxon>
        <taxon>Bdellovibrionales</taxon>
        <taxon>Pseudobdellovibrionaceae</taxon>
        <taxon>Bdellovibrio</taxon>
    </lineage>
</organism>
<proteinExistence type="inferred from homology"/>